<reference key="1">
    <citation type="submission" date="2008-06" db="EMBL/GenBank/DDBJ databases">
        <title>Complete sequence of Stenotrophomonas maltophilia R551-3.</title>
        <authorList>
            <consortium name="US DOE Joint Genome Institute"/>
            <person name="Lucas S."/>
            <person name="Copeland A."/>
            <person name="Lapidus A."/>
            <person name="Glavina del Rio T."/>
            <person name="Dalin E."/>
            <person name="Tice H."/>
            <person name="Pitluck S."/>
            <person name="Chain P."/>
            <person name="Malfatti S."/>
            <person name="Shin M."/>
            <person name="Vergez L."/>
            <person name="Lang D."/>
            <person name="Schmutz J."/>
            <person name="Larimer F."/>
            <person name="Land M."/>
            <person name="Hauser L."/>
            <person name="Kyrpides N."/>
            <person name="Mikhailova N."/>
            <person name="Taghavi S."/>
            <person name="Monchy S."/>
            <person name="Newman L."/>
            <person name="Vangronsveld J."/>
            <person name="van der Lelie D."/>
            <person name="Richardson P."/>
        </authorList>
    </citation>
    <scope>NUCLEOTIDE SEQUENCE [LARGE SCALE GENOMIC DNA]</scope>
    <source>
        <strain>R551-3</strain>
    </source>
</reference>
<keyword id="KW-0963">Cytoplasm</keyword>
<keyword id="KW-0233">DNA recombination</keyword>
<name>RDGC_STRM5</name>
<dbReference type="EMBL" id="CP001111">
    <property type="protein sequence ID" value="ACF49764.1"/>
    <property type="molecule type" value="Genomic_DNA"/>
</dbReference>
<dbReference type="RefSeq" id="WP_005411825.1">
    <property type="nucleotide sequence ID" value="NC_011071.1"/>
</dbReference>
<dbReference type="SMR" id="B4SRP4"/>
<dbReference type="STRING" id="391008.Smal_0059"/>
<dbReference type="KEGG" id="smt:Smal_0059"/>
<dbReference type="eggNOG" id="COG2974">
    <property type="taxonomic scope" value="Bacteria"/>
</dbReference>
<dbReference type="HOGENOM" id="CLU_052038_1_1_6"/>
<dbReference type="OrthoDB" id="5290530at2"/>
<dbReference type="Proteomes" id="UP000001867">
    <property type="component" value="Chromosome"/>
</dbReference>
<dbReference type="GO" id="GO:0043590">
    <property type="term" value="C:bacterial nucleoid"/>
    <property type="evidence" value="ECO:0007669"/>
    <property type="project" value="TreeGrafter"/>
</dbReference>
<dbReference type="GO" id="GO:0005737">
    <property type="term" value="C:cytoplasm"/>
    <property type="evidence" value="ECO:0007669"/>
    <property type="project" value="UniProtKB-UniRule"/>
</dbReference>
<dbReference type="GO" id="GO:0003690">
    <property type="term" value="F:double-stranded DNA binding"/>
    <property type="evidence" value="ECO:0007669"/>
    <property type="project" value="TreeGrafter"/>
</dbReference>
<dbReference type="GO" id="GO:0006310">
    <property type="term" value="P:DNA recombination"/>
    <property type="evidence" value="ECO:0007669"/>
    <property type="project" value="UniProtKB-UniRule"/>
</dbReference>
<dbReference type="GO" id="GO:0000018">
    <property type="term" value="P:regulation of DNA recombination"/>
    <property type="evidence" value="ECO:0007669"/>
    <property type="project" value="TreeGrafter"/>
</dbReference>
<dbReference type="HAMAP" id="MF_00194">
    <property type="entry name" value="RdgC"/>
    <property type="match status" value="1"/>
</dbReference>
<dbReference type="InterPro" id="IPR007476">
    <property type="entry name" value="RdgC"/>
</dbReference>
<dbReference type="NCBIfam" id="NF001464">
    <property type="entry name" value="PRK00321.1-5"/>
    <property type="match status" value="1"/>
</dbReference>
<dbReference type="NCBIfam" id="NF001465">
    <property type="entry name" value="PRK00321.1-6"/>
    <property type="match status" value="1"/>
</dbReference>
<dbReference type="PANTHER" id="PTHR38103">
    <property type="entry name" value="RECOMBINATION-ASSOCIATED PROTEIN RDGC"/>
    <property type="match status" value="1"/>
</dbReference>
<dbReference type="PANTHER" id="PTHR38103:SF1">
    <property type="entry name" value="RECOMBINATION-ASSOCIATED PROTEIN RDGC"/>
    <property type="match status" value="1"/>
</dbReference>
<dbReference type="Pfam" id="PF04381">
    <property type="entry name" value="RdgC"/>
    <property type="match status" value="1"/>
</dbReference>
<feature type="chain" id="PRO_1000099075" description="Recombination-associated protein RdgC">
    <location>
        <begin position="1"/>
        <end position="301"/>
    </location>
</feature>
<proteinExistence type="inferred from homology"/>
<sequence>MFFRNLTFFRFPTTTDFSEVDTLLPHALLKPVGALEMNSRGFISPFGREEKELLSHRIAEHLWLTVGGEDKILPAAVVNDLLERKLEEIEEKEGRRPGGRERKRMKDDLLHELLPRAFVKSSRNDAFIDLQHGYVAVDTSSRKTGEYFMSDIRGLLGSFPAMPLNAEVAPRSILTGWIAGEPLPTGLSLGEECEMKDPVEGGAVVKCQHQELRCDEIDKHLDAGKQVTKLALIFEDNLSFVIGDDLIVRKLKFLDGALDQLEHADEDGRRAEFDARFALQSAEIRRLFLLLEEAFKLSKAD</sequence>
<comment type="function">
    <text evidence="1">May be involved in recombination.</text>
</comment>
<comment type="subcellular location">
    <subcellularLocation>
        <location evidence="1">Cytoplasm</location>
        <location evidence="1">Nucleoid</location>
    </subcellularLocation>
</comment>
<comment type="similarity">
    <text evidence="1">Belongs to the RdgC family.</text>
</comment>
<evidence type="ECO:0000255" key="1">
    <source>
        <dbReference type="HAMAP-Rule" id="MF_00194"/>
    </source>
</evidence>
<protein>
    <recommendedName>
        <fullName evidence="1">Recombination-associated protein RdgC</fullName>
    </recommendedName>
</protein>
<accession>B4SRP4</accession>
<organism>
    <name type="scientific">Stenotrophomonas maltophilia (strain R551-3)</name>
    <dbReference type="NCBI Taxonomy" id="391008"/>
    <lineage>
        <taxon>Bacteria</taxon>
        <taxon>Pseudomonadati</taxon>
        <taxon>Pseudomonadota</taxon>
        <taxon>Gammaproteobacteria</taxon>
        <taxon>Lysobacterales</taxon>
        <taxon>Lysobacteraceae</taxon>
        <taxon>Stenotrophomonas</taxon>
        <taxon>Stenotrophomonas maltophilia group</taxon>
    </lineage>
</organism>
<gene>
    <name evidence="1" type="primary">rdgC</name>
    <name type="ordered locus">Smal_0059</name>
</gene>